<comment type="catalytic activity">
    <reaction evidence="1">
        <text>1-(5-phospho-beta-D-ribosyl)-5-[(5-phospho-beta-D-ribosylamino)methylideneamino]imidazole-4-carboxamide = 5-[(5-phospho-1-deoxy-D-ribulos-1-ylimino)methylamino]-1-(5-phospho-beta-D-ribosyl)imidazole-4-carboxamide</text>
        <dbReference type="Rhea" id="RHEA:15469"/>
        <dbReference type="ChEBI" id="CHEBI:58435"/>
        <dbReference type="ChEBI" id="CHEBI:58525"/>
        <dbReference type="EC" id="5.3.1.16"/>
    </reaction>
</comment>
<comment type="pathway">
    <text evidence="1">Amino-acid biosynthesis; L-histidine biosynthesis; L-histidine from 5-phospho-alpha-D-ribose 1-diphosphate: step 4/9.</text>
</comment>
<comment type="subcellular location">
    <subcellularLocation>
        <location evidence="1">Cytoplasm</location>
    </subcellularLocation>
</comment>
<comment type="similarity">
    <text evidence="1">Belongs to the HisA/HisF family.</text>
</comment>
<dbReference type="EC" id="5.3.1.16" evidence="1"/>
<dbReference type="EMBL" id="CP000302">
    <property type="protein sequence ID" value="ABE54897.1"/>
    <property type="molecule type" value="Genomic_DNA"/>
</dbReference>
<dbReference type="RefSeq" id="WP_011496055.1">
    <property type="nucleotide sequence ID" value="NC_007954.1"/>
</dbReference>
<dbReference type="SMR" id="Q12NS9"/>
<dbReference type="STRING" id="318161.Sden_1613"/>
<dbReference type="KEGG" id="sdn:Sden_1613"/>
<dbReference type="eggNOG" id="COG0106">
    <property type="taxonomic scope" value="Bacteria"/>
</dbReference>
<dbReference type="HOGENOM" id="CLU_048577_1_2_6"/>
<dbReference type="OrthoDB" id="9807749at2"/>
<dbReference type="UniPathway" id="UPA00031">
    <property type="reaction ID" value="UER00009"/>
</dbReference>
<dbReference type="Proteomes" id="UP000001982">
    <property type="component" value="Chromosome"/>
</dbReference>
<dbReference type="GO" id="GO:0005737">
    <property type="term" value="C:cytoplasm"/>
    <property type="evidence" value="ECO:0007669"/>
    <property type="project" value="UniProtKB-SubCell"/>
</dbReference>
<dbReference type="GO" id="GO:0003949">
    <property type="term" value="F:1-(5-phosphoribosyl)-5-[(5-phosphoribosylamino)methylideneamino]imidazole-4-carboxamide isomerase activity"/>
    <property type="evidence" value="ECO:0007669"/>
    <property type="project" value="UniProtKB-UniRule"/>
</dbReference>
<dbReference type="GO" id="GO:0000105">
    <property type="term" value="P:L-histidine biosynthetic process"/>
    <property type="evidence" value="ECO:0007669"/>
    <property type="project" value="UniProtKB-UniRule"/>
</dbReference>
<dbReference type="GO" id="GO:0000162">
    <property type="term" value="P:L-tryptophan biosynthetic process"/>
    <property type="evidence" value="ECO:0007669"/>
    <property type="project" value="TreeGrafter"/>
</dbReference>
<dbReference type="CDD" id="cd04732">
    <property type="entry name" value="HisA"/>
    <property type="match status" value="1"/>
</dbReference>
<dbReference type="FunFam" id="3.20.20.70:FF:000009">
    <property type="entry name" value="1-(5-phosphoribosyl)-5-[(5-phosphoribosylamino)methylideneamino] imidazole-4-carboxamide isomerase"/>
    <property type="match status" value="1"/>
</dbReference>
<dbReference type="Gene3D" id="3.20.20.70">
    <property type="entry name" value="Aldolase class I"/>
    <property type="match status" value="1"/>
</dbReference>
<dbReference type="HAMAP" id="MF_01014">
    <property type="entry name" value="HisA"/>
    <property type="match status" value="1"/>
</dbReference>
<dbReference type="InterPro" id="IPR013785">
    <property type="entry name" value="Aldolase_TIM"/>
</dbReference>
<dbReference type="InterPro" id="IPR006062">
    <property type="entry name" value="His_biosynth"/>
</dbReference>
<dbReference type="InterPro" id="IPR006063">
    <property type="entry name" value="HisA_bact_arch"/>
</dbReference>
<dbReference type="InterPro" id="IPR044524">
    <property type="entry name" value="Isoase_HisA-like"/>
</dbReference>
<dbReference type="InterPro" id="IPR023016">
    <property type="entry name" value="Isoase_HisA-like_bact"/>
</dbReference>
<dbReference type="InterPro" id="IPR011060">
    <property type="entry name" value="RibuloseP-bd_barrel"/>
</dbReference>
<dbReference type="NCBIfam" id="TIGR00007">
    <property type="entry name" value="1-(5-phosphoribosyl)-5-[(5-phosphoribosylamino)methylideneamino]imidazole-4-carboxamide isomerase"/>
    <property type="match status" value="1"/>
</dbReference>
<dbReference type="PANTHER" id="PTHR43090">
    <property type="entry name" value="1-(5-PHOSPHORIBOSYL)-5-[(5-PHOSPHORIBOSYLAMINO)METHYLIDENEAMINO] IMIDAZOLE-4-CARBOXAMIDE ISOMERASE"/>
    <property type="match status" value="1"/>
</dbReference>
<dbReference type="PANTHER" id="PTHR43090:SF2">
    <property type="entry name" value="1-(5-PHOSPHORIBOSYL)-5-[(5-PHOSPHORIBOSYLAMINO)METHYLIDENEAMINO] IMIDAZOLE-4-CARBOXAMIDE ISOMERASE"/>
    <property type="match status" value="1"/>
</dbReference>
<dbReference type="Pfam" id="PF00977">
    <property type="entry name" value="His_biosynth"/>
    <property type="match status" value="1"/>
</dbReference>
<dbReference type="SUPFAM" id="SSF51366">
    <property type="entry name" value="Ribulose-phoshate binding barrel"/>
    <property type="match status" value="1"/>
</dbReference>
<protein>
    <recommendedName>
        <fullName evidence="1">1-(5-phosphoribosyl)-5-[(5-phosphoribosylamino)methylideneamino] imidazole-4-carboxamide isomerase</fullName>
        <ecNumber evidence="1">5.3.1.16</ecNumber>
    </recommendedName>
    <alternativeName>
        <fullName evidence="1">Phosphoribosylformimino-5-aminoimidazole carboxamide ribotide isomerase</fullName>
    </alternativeName>
</protein>
<keyword id="KW-0028">Amino-acid biosynthesis</keyword>
<keyword id="KW-0963">Cytoplasm</keyword>
<keyword id="KW-0368">Histidine biosynthesis</keyword>
<keyword id="KW-0413">Isomerase</keyword>
<keyword id="KW-1185">Reference proteome</keyword>
<accession>Q12NS9</accession>
<organism>
    <name type="scientific">Shewanella denitrificans (strain OS217 / ATCC BAA-1090 / DSM 15013)</name>
    <dbReference type="NCBI Taxonomy" id="318161"/>
    <lineage>
        <taxon>Bacteria</taxon>
        <taxon>Pseudomonadati</taxon>
        <taxon>Pseudomonadota</taxon>
        <taxon>Gammaproteobacteria</taxon>
        <taxon>Alteromonadales</taxon>
        <taxon>Shewanellaceae</taxon>
        <taxon>Shewanella</taxon>
    </lineage>
</organism>
<sequence>MIIPAIDLIDGQVVRLYQGDYDKQTTFDLSPLAQLKSYQDQGAKLLHIVDLTGAKDPNQRQIKLISELVAGLDVDIQVGGGIRSEQQVTELLAIGVKRVVIGSLAVKEPELVKSWLNKYGSDAICLALDVNINANGEKIVAVSGWQSAGGKTLESLVAEFERPGSKQTALKHALVTDISRDGTLTGANTALYTELAAAYPTILWQASGGIATLDDVSAVKDSKAAGIIIGKALLINQFTVEEAIQCWPNA</sequence>
<feature type="chain" id="PRO_0000290535" description="1-(5-phosphoribosyl)-5-[(5-phosphoribosylamino)methylideneamino] imidazole-4-carboxamide isomerase">
    <location>
        <begin position="1"/>
        <end position="250"/>
    </location>
</feature>
<feature type="active site" description="Proton acceptor" evidence="1">
    <location>
        <position position="7"/>
    </location>
</feature>
<feature type="active site" description="Proton donor" evidence="1">
    <location>
        <position position="129"/>
    </location>
</feature>
<evidence type="ECO:0000255" key="1">
    <source>
        <dbReference type="HAMAP-Rule" id="MF_01014"/>
    </source>
</evidence>
<name>HIS4_SHEDO</name>
<gene>
    <name evidence="1" type="primary">hisA</name>
    <name type="ordered locus">Sden_1613</name>
</gene>
<proteinExistence type="inferred from homology"/>
<reference key="1">
    <citation type="submission" date="2006-03" db="EMBL/GenBank/DDBJ databases">
        <title>Complete sequence of Shewanella denitrificans OS217.</title>
        <authorList>
            <consortium name="US DOE Joint Genome Institute"/>
            <person name="Copeland A."/>
            <person name="Lucas S."/>
            <person name="Lapidus A."/>
            <person name="Barry K."/>
            <person name="Detter J.C."/>
            <person name="Glavina del Rio T."/>
            <person name="Hammon N."/>
            <person name="Israni S."/>
            <person name="Dalin E."/>
            <person name="Tice H."/>
            <person name="Pitluck S."/>
            <person name="Brettin T."/>
            <person name="Bruce D."/>
            <person name="Han C."/>
            <person name="Tapia R."/>
            <person name="Gilna P."/>
            <person name="Kiss H."/>
            <person name="Schmutz J."/>
            <person name="Larimer F."/>
            <person name="Land M."/>
            <person name="Hauser L."/>
            <person name="Kyrpides N."/>
            <person name="Lykidis A."/>
            <person name="Richardson P."/>
        </authorList>
    </citation>
    <scope>NUCLEOTIDE SEQUENCE [LARGE SCALE GENOMIC DNA]</scope>
    <source>
        <strain>OS217 / ATCC BAA-1090 / DSM 15013</strain>
    </source>
</reference>